<organism>
    <name type="scientific">Bordetella bronchiseptica (strain ATCC BAA-588 / NCTC 13252 / RB50)</name>
    <name type="common">Alcaligenes bronchisepticus</name>
    <dbReference type="NCBI Taxonomy" id="257310"/>
    <lineage>
        <taxon>Bacteria</taxon>
        <taxon>Pseudomonadati</taxon>
        <taxon>Pseudomonadota</taxon>
        <taxon>Betaproteobacteria</taxon>
        <taxon>Burkholderiales</taxon>
        <taxon>Alcaligenaceae</taxon>
        <taxon>Bordetella</taxon>
    </lineage>
</organism>
<gene>
    <name evidence="1" type="primary">orn</name>
    <name type="ordered locus">BB3438</name>
</gene>
<dbReference type="EC" id="3.1.15.-" evidence="1"/>
<dbReference type="EMBL" id="BX640447">
    <property type="protein sequence ID" value="CAE33930.1"/>
    <property type="molecule type" value="Genomic_DNA"/>
</dbReference>
<dbReference type="RefSeq" id="WP_003813303.1">
    <property type="nucleotide sequence ID" value="NC_002927.3"/>
</dbReference>
<dbReference type="SMR" id="Q7WGX3"/>
<dbReference type="GeneID" id="93203429"/>
<dbReference type="KEGG" id="bbr:BB3438"/>
<dbReference type="eggNOG" id="COG1949">
    <property type="taxonomic scope" value="Bacteria"/>
</dbReference>
<dbReference type="HOGENOM" id="CLU_064761_1_1_4"/>
<dbReference type="Proteomes" id="UP000001027">
    <property type="component" value="Chromosome"/>
</dbReference>
<dbReference type="GO" id="GO:0005737">
    <property type="term" value="C:cytoplasm"/>
    <property type="evidence" value="ECO:0007669"/>
    <property type="project" value="UniProtKB-SubCell"/>
</dbReference>
<dbReference type="GO" id="GO:0000175">
    <property type="term" value="F:3'-5'-RNA exonuclease activity"/>
    <property type="evidence" value="ECO:0007669"/>
    <property type="project" value="InterPro"/>
</dbReference>
<dbReference type="GO" id="GO:0003676">
    <property type="term" value="F:nucleic acid binding"/>
    <property type="evidence" value="ECO:0007669"/>
    <property type="project" value="InterPro"/>
</dbReference>
<dbReference type="GO" id="GO:0006259">
    <property type="term" value="P:DNA metabolic process"/>
    <property type="evidence" value="ECO:0007669"/>
    <property type="project" value="UniProtKB-ARBA"/>
</dbReference>
<dbReference type="CDD" id="cd06135">
    <property type="entry name" value="Orn"/>
    <property type="match status" value="1"/>
</dbReference>
<dbReference type="FunFam" id="3.30.420.10:FF:000003">
    <property type="entry name" value="Oligoribonuclease"/>
    <property type="match status" value="1"/>
</dbReference>
<dbReference type="Gene3D" id="3.30.420.10">
    <property type="entry name" value="Ribonuclease H-like superfamily/Ribonuclease H"/>
    <property type="match status" value="1"/>
</dbReference>
<dbReference type="HAMAP" id="MF_00045">
    <property type="entry name" value="Oligoribonuclease"/>
    <property type="match status" value="1"/>
</dbReference>
<dbReference type="InterPro" id="IPR013520">
    <property type="entry name" value="Exonuclease_RNaseT/DNA_pol3"/>
</dbReference>
<dbReference type="InterPro" id="IPR022894">
    <property type="entry name" value="Oligoribonuclease"/>
</dbReference>
<dbReference type="InterPro" id="IPR012337">
    <property type="entry name" value="RNaseH-like_sf"/>
</dbReference>
<dbReference type="InterPro" id="IPR036397">
    <property type="entry name" value="RNaseH_sf"/>
</dbReference>
<dbReference type="NCBIfam" id="NF003765">
    <property type="entry name" value="PRK05359.1"/>
    <property type="match status" value="1"/>
</dbReference>
<dbReference type="PANTHER" id="PTHR11046">
    <property type="entry name" value="OLIGORIBONUCLEASE, MITOCHONDRIAL"/>
    <property type="match status" value="1"/>
</dbReference>
<dbReference type="PANTHER" id="PTHR11046:SF0">
    <property type="entry name" value="OLIGORIBONUCLEASE, MITOCHONDRIAL"/>
    <property type="match status" value="1"/>
</dbReference>
<dbReference type="Pfam" id="PF00929">
    <property type="entry name" value="RNase_T"/>
    <property type="match status" value="1"/>
</dbReference>
<dbReference type="SMART" id="SM00479">
    <property type="entry name" value="EXOIII"/>
    <property type="match status" value="1"/>
</dbReference>
<dbReference type="SUPFAM" id="SSF53098">
    <property type="entry name" value="Ribonuclease H-like"/>
    <property type="match status" value="1"/>
</dbReference>
<name>ORN_BORBR</name>
<accession>Q7WGX3</accession>
<sequence>MAANENRLVWLDMEMTGLDPEKERIIEVAVVVTEADLTVVAEGPVLVVHQPDSLLDAMDNWNKSTHGKSGLIEKVKASTLGEAQAEQILLEFLAEHVPAGKSPLCGNTISQDRRFMYAYMPNLERFFHYRNLDVSTLKELARRWAPAVYKGFDKKSRHEALADIYESIDELKYYREHLLKV</sequence>
<comment type="function">
    <text evidence="1">3'-to-5' exoribonuclease specific for small oligoribonucleotides.</text>
</comment>
<comment type="subcellular location">
    <subcellularLocation>
        <location evidence="1">Cytoplasm</location>
    </subcellularLocation>
</comment>
<comment type="similarity">
    <text evidence="1">Belongs to the oligoribonuclease family.</text>
</comment>
<protein>
    <recommendedName>
        <fullName evidence="1">Oligoribonuclease</fullName>
        <ecNumber evidence="1">3.1.15.-</ecNumber>
    </recommendedName>
</protein>
<proteinExistence type="inferred from homology"/>
<keyword id="KW-0963">Cytoplasm</keyword>
<keyword id="KW-0269">Exonuclease</keyword>
<keyword id="KW-0378">Hydrolase</keyword>
<keyword id="KW-0540">Nuclease</keyword>
<evidence type="ECO:0000255" key="1">
    <source>
        <dbReference type="HAMAP-Rule" id="MF_00045"/>
    </source>
</evidence>
<reference key="1">
    <citation type="journal article" date="2003" name="Nat. Genet.">
        <title>Comparative analysis of the genome sequences of Bordetella pertussis, Bordetella parapertussis and Bordetella bronchiseptica.</title>
        <authorList>
            <person name="Parkhill J."/>
            <person name="Sebaihia M."/>
            <person name="Preston A."/>
            <person name="Murphy L.D."/>
            <person name="Thomson N.R."/>
            <person name="Harris D.E."/>
            <person name="Holden M.T.G."/>
            <person name="Churcher C.M."/>
            <person name="Bentley S.D."/>
            <person name="Mungall K.L."/>
            <person name="Cerdeno-Tarraga A.-M."/>
            <person name="Temple L."/>
            <person name="James K.D."/>
            <person name="Harris B."/>
            <person name="Quail M.A."/>
            <person name="Achtman M."/>
            <person name="Atkin R."/>
            <person name="Baker S."/>
            <person name="Basham D."/>
            <person name="Bason N."/>
            <person name="Cherevach I."/>
            <person name="Chillingworth T."/>
            <person name="Collins M."/>
            <person name="Cronin A."/>
            <person name="Davis P."/>
            <person name="Doggett J."/>
            <person name="Feltwell T."/>
            <person name="Goble A."/>
            <person name="Hamlin N."/>
            <person name="Hauser H."/>
            <person name="Holroyd S."/>
            <person name="Jagels K."/>
            <person name="Leather S."/>
            <person name="Moule S."/>
            <person name="Norberczak H."/>
            <person name="O'Neil S."/>
            <person name="Ormond D."/>
            <person name="Price C."/>
            <person name="Rabbinowitsch E."/>
            <person name="Rutter S."/>
            <person name="Sanders M."/>
            <person name="Saunders D."/>
            <person name="Seeger K."/>
            <person name="Sharp S."/>
            <person name="Simmonds M."/>
            <person name="Skelton J."/>
            <person name="Squares R."/>
            <person name="Squares S."/>
            <person name="Stevens K."/>
            <person name="Unwin L."/>
            <person name="Whitehead S."/>
            <person name="Barrell B.G."/>
            <person name="Maskell D.J."/>
        </authorList>
    </citation>
    <scope>NUCLEOTIDE SEQUENCE [LARGE SCALE GENOMIC DNA]</scope>
    <source>
        <strain>ATCC BAA-588 / NCTC 13252 / RB50</strain>
    </source>
</reference>
<feature type="chain" id="PRO_0000111019" description="Oligoribonuclease">
    <location>
        <begin position="1"/>
        <end position="181"/>
    </location>
</feature>
<feature type="domain" description="Exonuclease" evidence="1">
    <location>
        <begin position="8"/>
        <end position="171"/>
    </location>
</feature>
<feature type="active site" evidence="1">
    <location>
        <position position="129"/>
    </location>
</feature>